<keyword id="KW-0002">3D-structure</keyword>
<keyword id="KW-0963">Cytoplasm</keyword>
<keyword id="KW-0903">Direct protein sequencing</keyword>
<keyword id="KW-0448">Lipopolysaccharide biosynthesis</keyword>
<keyword id="KW-1185">Reference proteome</keyword>
<keyword id="KW-0808">Transferase</keyword>
<name>KDSA_ECOLI</name>
<dbReference type="EC" id="2.5.1.55"/>
<dbReference type="EMBL" id="X05552">
    <property type="protein sequence ID" value="CAA29067.1"/>
    <property type="molecule type" value="Genomic_DNA"/>
</dbReference>
<dbReference type="EMBL" id="U18555">
    <property type="protein sequence ID" value="AAC43441.1"/>
    <property type="molecule type" value="Genomic_DNA"/>
</dbReference>
<dbReference type="EMBL" id="U00096">
    <property type="protein sequence ID" value="AAC74299.1"/>
    <property type="molecule type" value="Genomic_DNA"/>
</dbReference>
<dbReference type="EMBL" id="AP009048">
    <property type="protein sequence ID" value="BAA36073.1"/>
    <property type="molecule type" value="Genomic_DNA"/>
</dbReference>
<dbReference type="PIR" id="I83573">
    <property type="entry name" value="SYECOL"/>
</dbReference>
<dbReference type="RefSeq" id="NP_415733.1">
    <property type="nucleotide sequence ID" value="NC_000913.3"/>
</dbReference>
<dbReference type="RefSeq" id="WP_000811065.1">
    <property type="nucleotide sequence ID" value="NZ_STEB01000023.1"/>
</dbReference>
<dbReference type="PDB" id="1D9E">
    <property type="method" value="X-ray"/>
    <property type="resolution" value="2.40 A"/>
    <property type="chains" value="A/B/C/D=1-284"/>
</dbReference>
<dbReference type="PDB" id="1G7U">
    <property type="method" value="X-ray"/>
    <property type="resolution" value="2.80 A"/>
    <property type="chains" value="A=1-284"/>
</dbReference>
<dbReference type="PDB" id="1G7V">
    <property type="method" value="X-ray"/>
    <property type="resolution" value="2.40 A"/>
    <property type="chains" value="A=1-284"/>
</dbReference>
<dbReference type="PDB" id="1GG0">
    <property type="method" value="X-ray"/>
    <property type="resolution" value="3.00 A"/>
    <property type="chains" value="A=1-284"/>
</dbReference>
<dbReference type="PDB" id="1PHQ">
    <property type="method" value="X-ray"/>
    <property type="resolution" value="2.70 A"/>
    <property type="chains" value="A=1-284"/>
</dbReference>
<dbReference type="PDB" id="1PHW">
    <property type="method" value="X-ray"/>
    <property type="resolution" value="2.36 A"/>
    <property type="chains" value="A=1-284"/>
</dbReference>
<dbReference type="PDB" id="1PL9">
    <property type="method" value="X-ray"/>
    <property type="resolution" value="2.90 A"/>
    <property type="chains" value="A=1-284"/>
</dbReference>
<dbReference type="PDB" id="1Q3N">
    <property type="method" value="X-ray"/>
    <property type="resolution" value="2.70 A"/>
    <property type="chains" value="A=1-284"/>
</dbReference>
<dbReference type="PDB" id="1X6U">
    <property type="method" value="X-ray"/>
    <property type="resolution" value="2.70 A"/>
    <property type="chains" value="A=1-284"/>
</dbReference>
<dbReference type="PDB" id="1X8F">
    <property type="method" value="X-ray"/>
    <property type="resolution" value="2.40 A"/>
    <property type="chains" value="A=1-284"/>
</dbReference>
<dbReference type="PDB" id="6U57">
    <property type="method" value="X-ray"/>
    <property type="resolution" value="2.80 A"/>
    <property type="chains" value="A=1-284"/>
</dbReference>
<dbReference type="PDBsum" id="1D9E"/>
<dbReference type="PDBsum" id="1G7U"/>
<dbReference type="PDBsum" id="1G7V"/>
<dbReference type="PDBsum" id="1GG0"/>
<dbReference type="PDBsum" id="1PHQ"/>
<dbReference type="PDBsum" id="1PHW"/>
<dbReference type="PDBsum" id="1PL9"/>
<dbReference type="PDBsum" id="1Q3N"/>
<dbReference type="PDBsum" id="1X6U"/>
<dbReference type="PDBsum" id="1X8F"/>
<dbReference type="PDBsum" id="6U57"/>
<dbReference type="SMR" id="P0A715"/>
<dbReference type="BioGRID" id="4260117">
    <property type="interactions" value="454"/>
</dbReference>
<dbReference type="DIP" id="DIP-35940N"/>
<dbReference type="FunCoup" id="P0A715">
    <property type="interactions" value="532"/>
</dbReference>
<dbReference type="IntAct" id="P0A715">
    <property type="interactions" value="47"/>
</dbReference>
<dbReference type="STRING" id="511145.b1215"/>
<dbReference type="jPOST" id="P0A715"/>
<dbReference type="PaxDb" id="511145-b1215"/>
<dbReference type="EnsemblBacteria" id="AAC74299">
    <property type="protein sequence ID" value="AAC74299"/>
    <property type="gene ID" value="b1215"/>
</dbReference>
<dbReference type="GeneID" id="75203328"/>
<dbReference type="GeneID" id="945785"/>
<dbReference type="KEGG" id="ecj:JW1206"/>
<dbReference type="KEGG" id="eco:b1215"/>
<dbReference type="KEGG" id="ecoc:C3026_07135"/>
<dbReference type="PATRIC" id="fig|1411691.4.peg.1069"/>
<dbReference type="EchoBASE" id="EB0513"/>
<dbReference type="eggNOG" id="COG2877">
    <property type="taxonomic scope" value="Bacteria"/>
</dbReference>
<dbReference type="HOGENOM" id="CLU_036666_0_0_6"/>
<dbReference type="InParanoid" id="P0A715"/>
<dbReference type="OMA" id="FGYHNLV"/>
<dbReference type="OrthoDB" id="9776934at2"/>
<dbReference type="PhylomeDB" id="P0A715"/>
<dbReference type="BioCyc" id="EcoCyc:KDO-8PSYNTH-MONOMER"/>
<dbReference type="BioCyc" id="MetaCyc:KDO-8PSYNTH-MONOMER"/>
<dbReference type="BRENDA" id="2.5.1.55">
    <property type="organism ID" value="2026"/>
</dbReference>
<dbReference type="SABIO-RK" id="P0A715"/>
<dbReference type="UniPathway" id="UPA00030"/>
<dbReference type="UniPathway" id="UPA00357">
    <property type="reaction ID" value="UER00474"/>
</dbReference>
<dbReference type="EvolutionaryTrace" id="P0A715"/>
<dbReference type="PRO" id="PR:P0A715"/>
<dbReference type="Proteomes" id="UP000000625">
    <property type="component" value="Chromosome"/>
</dbReference>
<dbReference type="GO" id="GO:0005829">
    <property type="term" value="C:cytosol"/>
    <property type="evidence" value="ECO:0000314"/>
    <property type="project" value="EcoCyc"/>
</dbReference>
<dbReference type="GO" id="GO:0032991">
    <property type="term" value="C:protein-containing complex"/>
    <property type="evidence" value="ECO:0000314"/>
    <property type="project" value="EcoCyc"/>
</dbReference>
<dbReference type="GO" id="GO:0008676">
    <property type="term" value="F:3-deoxy-8-phosphooctulonate synthase activity"/>
    <property type="evidence" value="ECO:0000314"/>
    <property type="project" value="EcoCyc"/>
</dbReference>
<dbReference type="GO" id="GO:0042802">
    <property type="term" value="F:identical protein binding"/>
    <property type="evidence" value="ECO:0000314"/>
    <property type="project" value="EcoCyc"/>
</dbReference>
<dbReference type="GO" id="GO:0019294">
    <property type="term" value="P:keto-3-deoxy-D-manno-octulosonic acid biosynthetic process"/>
    <property type="evidence" value="ECO:0000314"/>
    <property type="project" value="EcoCyc"/>
</dbReference>
<dbReference type="FunFam" id="3.20.20.70:FF:000058">
    <property type="entry name" value="2-dehydro-3-deoxyphosphooctonate aldolase"/>
    <property type="match status" value="1"/>
</dbReference>
<dbReference type="Gene3D" id="3.20.20.70">
    <property type="entry name" value="Aldolase class I"/>
    <property type="match status" value="1"/>
</dbReference>
<dbReference type="HAMAP" id="MF_00056">
    <property type="entry name" value="KDO8P_synth"/>
    <property type="match status" value="1"/>
</dbReference>
<dbReference type="InterPro" id="IPR013785">
    <property type="entry name" value="Aldolase_TIM"/>
</dbReference>
<dbReference type="InterPro" id="IPR006218">
    <property type="entry name" value="DAHP1/KDSA"/>
</dbReference>
<dbReference type="InterPro" id="IPR006269">
    <property type="entry name" value="KDO8P_synthase"/>
</dbReference>
<dbReference type="NCBIfam" id="TIGR01362">
    <property type="entry name" value="KDO8P_synth"/>
    <property type="match status" value="1"/>
</dbReference>
<dbReference type="NCBIfam" id="NF003543">
    <property type="entry name" value="PRK05198.1"/>
    <property type="match status" value="1"/>
</dbReference>
<dbReference type="NCBIfam" id="NF009109">
    <property type="entry name" value="PRK12457.1"/>
    <property type="match status" value="1"/>
</dbReference>
<dbReference type="PANTHER" id="PTHR21057">
    <property type="entry name" value="PHOSPHO-2-DEHYDRO-3-DEOXYHEPTONATE ALDOLASE"/>
    <property type="match status" value="1"/>
</dbReference>
<dbReference type="Pfam" id="PF00793">
    <property type="entry name" value="DAHP_synth_1"/>
    <property type="match status" value="1"/>
</dbReference>
<dbReference type="SUPFAM" id="SSF51569">
    <property type="entry name" value="Aldolase"/>
    <property type="match status" value="1"/>
</dbReference>
<proteinExistence type="evidence at protein level"/>
<accession>P0A715</accession>
<accession>P17579</accession>
<sequence>MKQKVVSIGDINVANDLPFVLFGGMNVLESRDLAMRICEHYVTVTQKLGIPYVFKASFDKANRSSIHSYRGPGLEEGMKIFQELKQTFGVKIITDVHEPSQAQPVADVVDVIQLPAFLARQTDLVEAMAKTGAVINVKKPQFVSPGQMGNIVDKFKEGGNEKVILCDRGANFGYDNLVVDMLGFSIMKKVSGNSPVIFDVTHALQCRDPFGAASGGRRAQVAELARAGMAVGLAGLFIEAHPDPEHAKCDGPSALPLAKLEPFLKQMKAIDDLVKGFEELDTSK</sequence>
<organism>
    <name type="scientific">Escherichia coli (strain K12)</name>
    <dbReference type="NCBI Taxonomy" id="83333"/>
    <lineage>
        <taxon>Bacteria</taxon>
        <taxon>Pseudomonadati</taxon>
        <taxon>Pseudomonadota</taxon>
        <taxon>Gammaproteobacteria</taxon>
        <taxon>Enterobacterales</taxon>
        <taxon>Enterobacteriaceae</taxon>
        <taxon>Escherichia</taxon>
    </lineage>
</organism>
<feature type="chain" id="PRO_0000187124" description="2-dehydro-3-deoxyphosphooctonate aldolase">
    <location>
        <begin position="1"/>
        <end position="284"/>
    </location>
</feature>
<feature type="sequence conflict" description="In Ref. 1; CAA29067." evidence="2" ref="1">
    <original>F</original>
    <variation>L</variation>
    <location>
        <position position="22"/>
    </location>
</feature>
<feature type="strand" evidence="4">
    <location>
        <begin position="6"/>
        <end position="8"/>
    </location>
</feature>
<feature type="strand" evidence="4">
    <location>
        <begin position="11"/>
        <end position="13"/>
    </location>
</feature>
<feature type="strand" evidence="3">
    <location>
        <begin position="15"/>
        <end position="17"/>
    </location>
</feature>
<feature type="strand" evidence="4">
    <location>
        <begin position="20"/>
        <end position="22"/>
    </location>
</feature>
<feature type="strand" evidence="4">
    <location>
        <begin position="24"/>
        <end position="27"/>
    </location>
</feature>
<feature type="helix" evidence="4">
    <location>
        <begin position="31"/>
        <end position="48"/>
    </location>
</feature>
<feature type="strand" evidence="4">
    <location>
        <begin position="55"/>
        <end position="58"/>
    </location>
</feature>
<feature type="strand" evidence="4">
    <location>
        <begin position="64"/>
        <end position="68"/>
    </location>
</feature>
<feature type="helix" evidence="4">
    <location>
        <begin position="74"/>
        <end position="88"/>
    </location>
</feature>
<feature type="strand" evidence="4">
    <location>
        <begin position="93"/>
        <end position="95"/>
    </location>
</feature>
<feature type="turn" evidence="4">
    <location>
        <begin position="99"/>
        <end position="101"/>
    </location>
</feature>
<feature type="helix" evidence="4">
    <location>
        <begin position="102"/>
        <end position="108"/>
    </location>
</feature>
<feature type="strand" evidence="4">
    <location>
        <begin position="110"/>
        <end position="114"/>
    </location>
</feature>
<feature type="helix" evidence="4">
    <location>
        <begin position="116"/>
        <end position="119"/>
    </location>
</feature>
<feature type="helix" evidence="4">
    <location>
        <begin position="122"/>
        <end position="131"/>
    </location>
</feature>
<feature type="strand" evidence="4">
    <location>
        <begin position="134"/>
        <end position="139"/>
    </location>
</feature>
<feature type="helix" evidence="4">
    <location>
        <begin position="145"/>
        <end position="147"/>
    </location>
</feature>
<feature type="helix" evidence="4">
    <location>
        <begin position="148"/>
        <end position="156"/>
    </location>
</feature>
<feature type="turn" evidence="4">
    <location>
        <begin position="157"/>
        <end position="159"/>
    </location>
</feature>
<feature type="strand" evidence="4">
    <location>
        <begin position="163"/>
        <end position="167"/>
    </location>
</feature>
<feature type="strand" evidence="4">
    <location>
        <begin position="173"/>
        <end position="175"/>
    </location>
</feature>
<feature type="helix" evidence="4">
    <location>
        <begin position="183"/>
        <end position="190"/>
    </location>
</feature>
<feature type="turn" evidence="4">
    <location>
        <begin position="191"/>
        <end position="193"/>
    </location>
</feature>
<feature type="strand" evidence="4">
    <location>
        <begin position="196"/>
        <end position="199"/>
    </location>
</feature>
<feature type="helix" evidence="4">
    <location>
        <begin position="201"/>
        <end position="204"/>
    </location>
</feature>
<feature type="strand" evidence="3">
    <location>
        <begin position="211"/>
        <end position="213"/>
    </location>
</feature>
<feature type="turn" evidence="4">
    <location>
        <begin position="219"/>
        <end position="222"/>
    </location>
</feature>
<feature type="helix" evidence="4">
    <location>
        <begin position="223"/>
        <end position="231"/>
    </location>
</feature>
<feature type="strand" evidence="4">
    <location>
        <begin position="234"/>
        <end position="237"/>
    </location>
</feature>
<feature type="strand" evidence="4">
    <location>
        <begin position="240"/>
        <end position="242"/>
    </location>
</feature>
<feature type="helix" evidence="4">
    <location>
        <begin position="244"/>
        <end position="247"/>
    </location>
</feature>
<feature type="strand" evidence="4">
    <location>
        <begin position="250"/>
        <end position="252"/>
    </location>
</feature>
<feature type="helix" evidence="4">
    <location>
        <begin position="257"/>
        <end position="259"/>
    </location>
</feature>
<feature type="helix" evidence="4">
    <location>
        <begin position="260"/>
        <end position="275"/>
    </location>
</feature>
<reference key="1">
    <citation type="journal article" date="1987" name="Mol. Gen. Genet.">
        <title>The kdsA gene coding for 3-deoxy-D-manno-octulosonic acid 8-phosphate synthetase is part of an operon in Escherichia coli.</title>
        <authorList>
            <person name="Woisetschlaeger M."/>
            <person name="Hoegenauer G."/>
        </authorList>
    </citation>
    <scope>NUCLEOTIDE SEQUENCE [GENOMIC DNA]</scope>
    <source>
        <strain>K12</strain>
    </source>
</reference>
<reference key="2">
    <citation type="journal article" date="1995" name="J. Bacteriol.">
        <title>Expression of genes kdsA and kdsB involved in 3-deoxy-D-manno-octulosonic acid metabolism and biosynthesis of enterobacterial lipopolysaccharide is growth phase regulated primarily at the transcriptional level in Escherichia coli K-12.</title>
        <authorList>
            <person name="Strohmaier H."/>
            <person name="Remler P."/>
            <person name="Renner W."/>
            <person name="Hoegenauer G."/>
        </authorList>
    </citation>
    <scope>NUCLEOTIDE SEQUENCE [GENOMIC DNA]</scope>
    <source>
        <strain>K12</strain>
    </source>
</reference>
<reference key="3">
    <citation type="journal article" date="1996" name="DNA Res.">
        <title>A 718-kb DNA sequence of the Escherichia coli K-12 genome corresponding to the 12.7-28.0 min region on the linkage map.</title>
        <authorList>
            <person name="Oshima T."/>
            <person name="Aiba H."/>
            <person name="Baba T."/>
            <person name="Fujita K."/>
            <person name="Hayashi K."/>
            <person name="Honjo A."/>
            <person name="Ikemoto K."/>
            <person name="Inada T."/>
            <person name="Itoh T."/>
            <person name="Kajihara M."/>
            <person name="Kanai K."/>
            <person name="Kashimoto K."/>
            <person name="Kimura S."/>
            <person name="Kitagawa M."/>
            <person name="Makino K."/>
            <person name="Masuda S."/>
            <person name="Miki T."/>
            <person name="Mizobuchi K."/>
            <person name="Mori H."/>
            <person name="Motomura K."/>
            <person name="Nakamura Y."/>
            <person name="Nashimoto H."/>
            <person name="Nishio Y."/>
            <person name="Saito N."/>
            <person name="Sampei G."/>
            <person name="Seki Y."/>
            <person name="Tagami H."/>
            <person name="Takemoto K."/>
            <person name="Wada C."/>
            <person name="Yamamoto Y."/>
            <person name="Yano M."/>
            <person name="Horiuchi T."/>
        </authorList>
    </citation>
    <scope>NUCLEOTIDE SEQUENCE [LARGE SCALE GENOMIC DNA]</scope>
    <source>
        <strain>K12 / W3110 / ATCC 27325 / DSM 5911</strain>
    </source>
</reference>
<reference key="4">
    <citation type="journal article" date="1997" name="Science">
        <title>The complete genome sequence of Escherichia coli K-12.</title>
        <authorList>
            <person name="Blattner F.R."/>
            <person name="Plunkett G. III"/>
            <person name="Bloch C.A."/>
            <person name="Perna N.T."/>
            <person name="Burland V."/>
            <person name="Riley M."/>
            <person name="Collado-Vides J."/>
            <person name="Glasner J.D."/>
            <person name="Rode C.K."/>
            <person name="Mayhew G.F."/>
            <person name="Gregor J."/>
            <person name="Davis N.W."/>
            <person name="Kirkpatrick H.A."/>
            <person name="Goeden M.A."/>
            <person name="Rose D.J."/>
            <person name="Mau B."/>
            <person name="Shao Y."/>
        </authorList>
    </citation>
    <scope>NUCLEOTIDE SEQUENCE [LARGE SCALE GENOMIC DNA]</scope>
    <source>
        <strain>K12 / MG1655 / ATCC 47076</strain>
    </source>
</reference>
<reference key="5">
    <citation type="journal article" date="2006" name="Mol. Syst. Biol.">
        <title>Highly accurate genome sequences of Escherichia coli K-12 strains MG1655 and W3110.</title>
        <authorList>
            <person name="Hayashi K."/>
            <person name="Morooka N."/>
            <person name="Yamamoto Y."/>
            <person name="Fujita K."/>
            <person name="Isono K."/>
            <person name="Choi S."/>
            <person name="Ohtsubo E."/>
            <person name="Baba T."/>
            <person name="Wanner B.L."/>
            <person name="Mori H."/>
            <person name="Horiuchi T."/>
        </authorList>
    </citation>
    <scope>NUCLEOTIDE SEQUENCE [LARGE SCALE GENOMIC DNA]</scope>
    <source>
        <strain>K12 / W3110 / ATCC 27325 / DSM 5911</strain>
    </source>
</reference>
<reference key="6">
    <citation type="journal article" date="1997" name="Electrophoresis">
        <title>Comparing the predicted and observed properties of proteins encoded in the genome of Escherichia coli K-12.</title>
        <authorList>
            <person name="Link A.J."/>
            <person name="Robison K."/>
            <person name="Church G.M."/>
        </authorList>
    </citation>
    <scope>PROTEIN SEQUENCE OF 1-12</scope>
    <source>
        <strain>K12 / EMG2</strain>
    </source>
</reference>
<reference key="7">
    <citation type="journal article" date="1995" name="J. Biol. Chem.">
        <title>Overproduction and one-step purification of Escherichia coli 3-deoxy-D-manno-octulosonic acid 8-phosphate synthase and oxygen transfer studies during catalysis using isotopic-shifted heteronuclear NMR.</title>
        <authorList>
            <person name="Dotson G.D."/>
            <person name="Dua R.K."/>
            <person name="Clemens J.C."/>
            <person name="Wooten E.W."/>
            <person name="Woodard R.W."/>
        </authorList>
    </citation>
    <scope>CHARACTERIZATION</scope>
    <scope>PROTEIN SEQUENCE OF 1-10</scope>
</reference>
<reference key="8">
    <citation type="journal article" date="2000" name="J. Mol. Biol.">
        <title>3-deoxy-D-manno-octulosonate-8-phosphate synthase from Escherichia coli. Model of binding of phosphoenolpyruvate and D-arabinose-5-phosphate.</title>
        <authorList>
            <person name="Wagner T."/>
            <person name="Kretsinger R.H."/>
            <person name="Bauerle R."/>
            <person name="Tolbert W.D."/>
        </authorList>
    </citation>
    <scope>X-RAY CRYSTALLOGRAPHY (3.0 ANGSTROMS)</scope>
</reference>
<reference key="9">
    <citation type="journal article" date="2001" name="Biochemistry">
        <title>Crystal structures of KDOP synthase in its binary complexes with the substrate phosphoenolpyruvate and with a mechanism-based inhibitor.</title>
        <authorList>
            <person name="Asojo O."/>
            <person name="Friedman J."/>
            <person name="Adir N."/>
            <person name="Belakhov V."/>
            <person name="Shoham Y."/>
            <person name="Baasov T."/>
        </authorList>
    </citation>
    <scope>X-RAY CRYSTALLOGRAPHY (2.8 ANGSTROMS)</scope>
    <scope>MASS SPECTROMETRY</scope>
</reference>
<protein>
    <recommendedName>
        <fullName>2-dehydro-3-deoxyphosphooctonate aldolase</fullName>
        <ecNumber>2.5.1.55</ecNumber>
    </recommendedName>
    <alternativeName>
        <fullName>3-deoxy-D-manno-octulosonic acid 8-phosphate synthase</fullName>
    </alternativeName>
    <alternativeName>
        <fullName>KDO-8-phosphate synthase</fullName>
        <shortName>KDO 8-P synthase</shortName>
        <shortName>KDOPS</shortName>
    </alternativeName>
    <alternativeName>
        <fullName>Phospho-2-dehydro-3-deoxyoctonate aldolase</fullName>
    </alternativeName>
</protein>
<comment type="function">
    <text>Synthesis of KDO 8-P which is required for lipid A maturation and cellular growth.</text>
</comment>
<comment type="catalytic activity">
    <reaction>
        <text>D-arabinose 5-phosphate + phosphoenolpyruvate + H2O = 3-deoxy-alpha-D-manno-2-octulosonate-8-phosphate + phosphate</text>
        <dbReference type="Rhea" id="RHEA:14053"/>
        <dbReference type="ChEBI" id="CHEBI:15377"/>
        <dbReference type="ChEBI" id="CHEBI:43474"/>
        <dbReference type="ChEBI" id="CHEBI:57693"/>
        <dbReference type="ChEBI" id="CHEBI:58702"/>
        <dbReference type="ChEBI" id="CHEBI:85985"/>
        <dbReference type="EC" id="2.5.1.55"/>
    </reaction>
</comment>
<comment type="pathway">
    <text>Carbohydrate biosynthesis; 3-deoxy-D-manno-octulosonate biosynthesis; 3-deoxy-D-manno-octulosonate from D-ribulose 5-phosphate: step 2/3.</text>
</comment>
<comment type="pathway">
    <text>Bacterial outer membrane biogenesis; lipopolysaccharide biosynthesis.</text>
</comment>
<comment type="subunit">
    <text>Homotrimer.</text>
</comment>
<comment type="subcellular location">
    <subcellularLocation>
        <location>Cytoplasm</location>
    </subcellularLocation>
</comment>
<comment type="mass spectrometry"/>
<comment type="similarity">
    <text evidence="2">Belongs to the KdsA family.</text>
</comment>
<gene>
    <name type="primary">kdsA</name>
    <name type="ordered locus">b1215</name>
    <name type="ordered locus">JW1206</name>
</gene>
<evidence type="ECO:0000269" key="1">
    <source>
    </source>
</evidence>
<evidence type="ECO:0000305" key="2"/>
<evidence type="ECO:0007829" key="3">
    <source>
        <dbReference type="PDB" id="1G7V"/>
    </source>
</evidence>
<evidence type="ECO:0007829" key="4">
    <source>
        <dbReference type="PDB" id="1PHW"/>
    </source>
</evidence>